<accession>Q2KYS7</accession>
<evidence type="ECO:0000255" key="1">
    <source>
        <dbReference type="HAMAP-Rule" id="MF_00469"/>
    </source>
</evidence>
<sequence length="242" mass="26811">MSIVNIAAYKFVSLPDTVLLREALQERADALGLKGTILLAPEGINLFLAGSGEAIEAFLAGLRADARFADIEVKYSTSADVPFGKMRVRLKREIIRMNHPAIRPEAGRAPSVNAHTLARWLEQGRDDDGREVVMLDTRNAFEVDVGTFRNAIDWRIDRFTQFPDAVREHRAELEGKTVVSFCTGGIRCEKAAIFMEDIGIAHVYQLEGGILKYFEETGGPGYDGACFVFDERHALDPALKPV</sequence>
<dbReference type="EC" id="1.14.-.-" evidence="1"/>
<dbReference type="EMBL" id="AM167904">
    <property type="protein sequence ID" value="CAJ48076.1"/>
    <property type="molecule type" value="Genomic_DNA"/>
</dbReference>
<dbReference type="RefSeq" id="WP_012416167.1">
    <property type="nucleotide sequence ID" value="NC_010645.1"/>
</dbReference>
<dbReference type="SMR" id="Q2KYS7"/>
<dbReference type="STRING" id="360910.BAV0471"/>
<dbReference type="GeneID" id="92936351"/>
<dbReference type="KEGG" id="bav:BAV0471"/>
<dbReference type="eggNOG" id="COG1054">
    <property type="taxonomic scope" value="Bacteria"/>
</dbReference>
<dbReference type="HOGENOM" id="CLU_038878_0_1_4"/>
<dbReference type="OrthoDB" id="9778326at2"/>
<dbReference type="Proteomes" id="UP000001977">
    <property type="component" value="Chromosome"/>
</dbReference>
<dbReference type="GO" id="GO:0016705">
    <property type="term" value="F:oxidoreductase activity, acting on paired donors, with incorporation or reduction of molecular oxygen"/>
    <property type="evidence" value="ECO:0007669"/>
    <property type="project" value="UniProtKB-UniRule"/>
</dbReference>
<dbReference type="GO" id="GO:0006400">
    <property type="term" value="P:tRNA modification"/>
    <property type="evidence" value="ECO:0007669"/>
    <property type="project" value="UniProtKB-UniRule"/>
</dbReference>
<dbReference type="CDD" id="cd01518">
    <property type="entry name" value="RHOD_YceA"/>
    <property type="match status" value="1"/>
</dbReference>
<dbReference type="Gene3D" id="3.30.70.100">
    <property type="match status" value="1"/>
</dbReference>
<dbReference type="Gene3D" id="3.40.250.10">
    <property type="entry name" value="Rhodanese-like domain"/>
    <property type="match status" value="1"/>
</dbReference>
<dbReference type="HAMAP" id="MF_00469">
    <property type="entry name" value="TrhO"/>
    <property type="match status" value="1"/>
</dbReference>
<dbReference type="InterPro" id="IPR001763">
    <property type="entry name" value="Rhodanese-like_dom"/>
</dbReference>
<dbReference type="InterPro" id="IPR036873">
    <property type="entry name" value="Rhodanese-like_dom_sf"/>
</dbReference>
<dbReference type="InterPro" id="IPR020936">
    <property type="entry name" value="TrhO"/>
</dbReference>
<dbReference type="InterPro" id="IPR040503">
    <property type="entry name" value="TRHO_N"/>
</dbReference>
<dbReference type="NCBIfam" id="NF003703">
    <property type="entry name" value="PRK05320.1"/>
    <property type="match status" value="1"/>
</dbReference>
<dbReference type="PANTHER" id="PTHR43268:SF3">
    <property type="entry name" value="RHODANESE-LIKE DOMAIN-CONTAINING PROTEIN 7-RELATED"/>
    <property type="match status" value="1"/>
</dbReference>
<dbReference type="PANTHER" id="PTHR43268">
    <property type="entry name" value="THIOSULFATE SULFURTRANSFERASE/RHODANESE-LIKE DOMAIN-CONTAINING PROTEIN 2"/>
    <property type="match status" value="1"/>
</dbReference>
<dbReference type="Pfam" id="PF00581">
    <property type="entry name" value="Rhodanese"/>
    <property type="match status" value="1"/>
</dbReference>
<dbReference type="Pfam" id="PF17773">
    <property type="entry name" value="UPF0176_N"/>
    <property type="match status" value="1"/>
</dbReference>
<dbReference type="SMART" id="SM00450">
    <property type="entry name" value="RHOD"/>
    <property type="match status" value="1"/>
</dbReference>
<dbReference type="SUPFAM" id="SSF52821">
    <property type="entry name" value="Rhodanese/Cell cycle control phosphatase"/>
    <property type="match status" value="1"/>
</dbReference>
<dbReference type="PROSITE" id="PS50206">
    <property type="entry name" value="RHODANESE_3"/>
    <property type="match status" value="1"/>
</dbReference>
<name>TRHO_BORA1</name>
<feature type="chain" id="PRO_0000242911" description="tRNA uridine(34) hydroxylase">
    <location>
        <begin position="1"/>
        <end position="242"/>
    </location>
</feature>
<feature type="domain" description="Rhodanese" evidence="1">
    <location>
        <begin position="128"/>
        <end position="222"/>
    </location>
</feature>
<feature type="active site" description="Cysteine persulfide intermediate" evidence="1">
    <location>
        <position position="182"/>
    </location>
</feature>
<reference key="1">
    <citation type="journal article" date="2006" name="J. Bacteriol.">
        <title>Comparison of the genome sequence of the poultry pathogen Bordetella avium with those of B. bronchiseptica, B. pertussis, and B. parapertussis reveals extensive diversity in surface structures associated with host interaction.</title>
        <authorList>
            <person name="Sebaihia M."/>
            <person name="Preston A."/>
            <person name="Maskell D.J."/>
            <person name="Kuzmiak H."/>
            <person name="Connell T.D."/>
            <person name="King N.D."/>
            <person name="Orndorff P.E."/>
            <person name="Miyamoto D.M."/>
            <person name="Thomson N.R."/>
            <person name="Harris D."/>
            <person name="Goble A."/>
            <person name="Lord A."/>
            <person name="Murphy L."/>
            <person name="Quail M.A."/>
            <person name="Rutter S."/>
            <person name="Squares R."/>
            <person name="Squares S."/>
            <person name="Woodward J."/>
            <person name="Parkhill J."/>
            <person name="Temple L.M."/>
        </authorList>
    </citation>
    <scope>NUCLEOTIDE SEQUENCE [LARGE SCALE GENOMIC DNA]</scope>
    <source>
        <strain>197N</strain>
    </source>
</reference>
<protein>
    <recommendedName>
        <fullName evidence="1">tRNA uridine(34) hydroxylase</fullName>
        <ecNumber evidence="1">1.14.-.-</ecNumber>
    </recommendedName>
    <alternativeName>
        <fullName evidence="1">tRNA hydroxylation protein O</fullName>
    </alternativeName>
</protein>
<organism>
    <name type="scientific">Bordetella avium (strain 197N)</name>
    <dbReference type="NCBI Taxonomy" id="360910"/>
    <lineage>
        <taxon>Bacteria</taxon>
        <taxon>Pseudomonadati</taxon>
        <taxon>Pseudomonadota</taxon>
        <taxon>Betaproteobacteria</taxon>
        <taxon>Burkholderiales</taxon>
        <taxon>Alcaligenaceae</taxon>
        <taxon>Bordetella</taxon>
    </lineage>
</organism>
<proteinExistence type="inferred from homology"/>
<keyword id="KW-0560">Oxidoreductase</keyword>
<keyword id="KW-1185">Reference proteome</keyword>
<keyword id="KW-0819">tRNA processing</keyword>
<gene>
    <name evidence="1" type="primary">trhO</name>
    <name type="ordered locus">BAV0471</name>
</gene>
<comment type="function">
    <text evidence="1">Catalyzes oxygen-dependent 5-hydroxyuridine (ho5U) modification at position 34 in tRNAs.</text>
</comment>
<comment type="catalytic activity">
    <reaction evidence="1">
        <text>uridine(34) in tRNA + AH2 + O2 = 5-hydroxyuridine(34) in tRNA + A + H2O</text>
        <dbReference type="Rhea" id="RHEA:64224"/>
        <dbReference type="Rhea" id="RHEA-COMP:11727"/>
        <dbReference type="Rhea" id="RHEA-COMP:13381"/>
        <dbReference type="ChEBI" id="CHEBI:13193"/>
        <dbReference type="ChEBI" id="CHEBI:15377"/>
        <dbReference type="ChEBI" id="CHEBI:15379"/>
        <dbReference type="ChEBI" id="CHEBI:17499"/>
        <dbReference type="ChEBI" id="CHEBI:65315"/>
        <dbReference type="ChEBI" id="CHEBI:136877"/>
    </reaction>
</comment>
<comment type="similarity">
    <text evidence="1">Belongs to the TrhO family.</text>
</comment>